<proteinExistence type="evidence at protein level"/>
<sequence>MPTESASCSTARQTKQKRKSHSLSIRRTNSSEQERTGLPRDMLEGQDSKLPSSVRSTLLELFGQIEREFENLYIENLELRREIDTLNERLAAEGQAIDGAELSKGQLKTKASHSTSQLSQKLKTTYKASTSKIVSSFKTTTSRAACQLVKEYIGHRDGIWDVSVAKTQPVVLGTASADHTALLWSIETGKCLVKYAGHVGSVNSIKFHPSEQLALTASGDQTAHIWRYAVQLPTPQPVADTSISGEDEVECSDKDEPDLDGDVSSDCPTIRVPLTSLKSHQGVVIASDWLVGGKQAVTASWDRTANLYDVETSELVHSLTGHDQELTHCCTHPTQRLVVTSSRDTTFRLWDFRDPSIHSVNVFQGHTDTVTSAVFTVGDNVVSGSDDRTVKVWDLKNMRSPIATIRTDSAINRINVCVGQKIIALPHDNRQVRLFDMSGVRLARLPRSSRQGHRRMVCCSAWSEDHPVCNLFTCGFDRQAIGWNINIPALLQEK</sequence>
<accession>Q9Y2I8</accession>
<accession>A8K976</accession>
<accession>D3DRQ7</accession>
<accession>Q5SW03</accession>
<accession>Q8WVG2</accession>
<accession>Q9NTJ6</accession>
<name>WDR37_HUMAN</name>
<evidence type="ECO:0000250" key="1">
    <source>
        <dbReference type="UniProtKB" id="Q8CBE3"/>
    </source>
</evidence>
<evidence type="ECO:0000256" key="2">
    <source>
        <dbReference type="SAM" id="MobiDB-lite"/>
    </source>
</evidence>
<evidence type="ECO:0000269" key="3">
    <source>
    </source>
</evidence>
<evidence type="ECO:0000269" key="4">
    <source>
    </source>
</evidence>
<evidence type="ECO:0000269" key="5">
    <source>
    </source>
</evidence>
<evidence type="ECO:0000269" key="6">
    <source>
    </source>
</evidence>
<evidence type="ECO:0000269" key="7">
    <source>
    </source>
</evidence>
<evidence type="ECO:0000303" key="8">
    <source>
    </source>
</evidence>
<evidence type="ECO:0000303" key="9">
    <source>
    </source>
</evidence>
<evidence type="ECO:0000305" key="10"/>
<protein>
    <recommendedName>
        <fullName>WD repeat-containing protein 37</fullName>
    </recommendedName>
</protein>
<comment type="function">
    <text evidence="1">Required for normal ER Ca2+ handling in lymphocytes. Together with PACS1, it plays an essential role in stabilizing peripheral lymphocyte populations.</text>
</comment>
<comment type="subunit">
    <text evidence="1 7">Forms homodimers (PubMed:34642815). Interacts with PACS1 (PubMed:34642815). Interacts with PACS2 (PubMed:34642815).</text>
</comment>
<comment type="interaction">
    <interactant intactId="EBI-12369603">
        <id>Q9Y2I8-3</id>
    </interactant>
    <interactant intactId="EBI-16439278">
        <id>Q6FHY5</id>
        <label>MEOX2</label>
    </interactant>
    <organismsDiffer>false</organismsDiffer>
    <experiments>3</experiments>
</comment>
<comment type="subcellular location">
    <subcellularLocation>
        <location evidence="5 7">Cytoplasm</location>
    </subcellularLocation>
    <subcellularLocation>
        <location evidence="5">Nucleus</location>
    </subcellularLocation>
    <text evidence="7">Primarily localized in the cytoplasm with the highest concentration in the perinuclear region and in small clusters at the leading edge of the spreading cells.</text>
</comment>
<comment type="alternative products">
    <event type="alternative splicing"/>
    <isoform>
        <id>Q9Y2I8-1</id>
        <name>1</name>
        <sequence type="displayed"/>
    </isoform>
    <isoform>
        <id>Q9Y2I8-2</id>
        <name>2</name>
        <sequence type="described" ref="VSP_054011"/>
    </isoform>
    <isoform>
        <id>Q9Y2I8-3</id>
        <name>3</name>
        <sequence type="described" ref="VSP_054012 VSP_054013"/>
    </isoform>
</comment>
<comment type="disease" evidence="4 5 6 7">
    <disease id="DI-05698">
        <name>Neurooculocardiogenitourinary syndrome</name>
        <acronym>NOCGUS</acronym>
        <description>An autosomal dominant multisystem disorder characterized by significant neurological impairment with structural brain defects and seizures, poor feeding, poor postnatal growth, ocular anomalies, dysmorphic facial features, and variable skeletal, cardiac and genitourinary defects. Death in infancy may occur.</description>
        <dbReference type="MIM" id="618652"/>
    </disease>
    <text>The disease is caused by variants affecting the gene represented in this entry.</text>
</comment>
<comment type="sequence caution" evidence="10">
    <conflict type="erroneous initiation">
        <sequence resource="EMBL-CDS" id="BAA76826"/>
    </conflict>
</comment>
<keyword id="KW-0025">Alternative splicing</keyword>
<keyword id="KW-0963">Cytoplasm</keyword>
<keyword id="KW-0225">Disease variant</keyword>
<keyword id="KW-0539">Nucleus</keyword>
<keyword id="KW-1267">Proteomics identification</keyword>
<keyword id="KW-1185">Reference proteome</keyword>
<keyword id="KW-0677">Repeat</keyword>
<keyword id="KW-0853">WD repeat</keyword>
<feature type="chain" id="PRO_0000051387" description="WD repeat-containing protein 37">
    <location>
        <begin position="1"/>
        <end position="494"/>
    </location>
</feature>
<feature type="repeat" description="WD 1">
    <location>
        <begin position="154"/>
        <end position="194"/>
    </location>
</feature>
<feature type="repeat" description="WD 2">
    <location>
        <begin position="197"/>
        <end position="236"/>
    </location>
</feature>
<feature type="repeat" description="WD 3">
    <location>
        <begin position="279"/>
        <end position="318"/>
    </location>
</feature>
<feature type="repeat" description="WD 4">
    <location>
        <begin position="321"/>
        <end position="360"/>
    </location>
</feature>
<feature type="repeat" description="WD 5">
    <location>
        <begin position="365"/>
        <end position="403"/>
    </location>
</feature>
<feature type="repeat" description="WD 6">
    <location>
        <begin position="406"/>
        <end position="445"/>
    </location>
</feature>
<feature type="repeat" description="WD 7">
    <location>
        <begin position="452"/>
        <end position="493"/>
    </location>
</feature>
<feature type="region of interest" description="Disordered" evidence="2">
    <location>
        <begin position="1"/>
        <end position="50"/>
    </location>
</feature>
<feature type="region of interest" description="Disordered" evidence="2">
    <location>
        <begin position="237"/>
        <end position="265"/>
    </location>
</feature>
<feature type="compositionally biased region" description="Polar residues" evidence="2">
    <location>
        <begin position="1"/>
        <end position="13"/>
    </location>
</feature>
<feature type="compositionally biased region" description="Polar residues" evidence="2">
    <location>
        <begin position="22"/>
        <end position="31"/>
    </location>
</feature>
<feature type="compositionally biased region" description="Basic and acidic residues" evidence="2">
    <location>
        <begin position="32"/>
        <end position="47"/>
    </location>
</feature>
<feature type="compositionally biased region" description="Acidic residues" evidence="2">
    <location>
        <begin position="245"/>
        <end position="263"/>
    </location>
</feature>
<feature type="splice variant" id="VSP_054011" description="In isoform 2." evidence="8">
    <original>S</original>
    <variation>SQ</variation>
    <location>
        <position position="242"/>
    </location>
</feature>
<feature type="splice variant" id="VSP_054012" description="In isoform 3." evidence="9">
    <original>ISGEDEVECSDKDEPDLDGDVS</original>
    <variation>VSTFPYLRMCRMLMSANLRIHL</variation>
    <location>
        <begin position="243"/>
        <end position="264"/>
    </location>
</feature>
<feature type="splice variant" id="VSP_054013" description="In isoform 3." evidence="9">
    <location>
        <begin position="265"/>
        <end position="494"/>
    </location>
</feature>
<feature type="sequence variant" id="VAR_070805" description="In dbSNP:rs17856557." evidence="3">
    <original>A</original>
    <variation>T</variation>
    <location>
        <position position="11"/>
    </location>
</feature>
<feature type="sequence variant" id="VAR_087686" description="In NOCGUS." evidence="6">
    <original>T</original>
    <variation>I</variation>
    <location>
        <position position="115"/>
    </location>
</feature>
<feature type="sequence variant" id="VAR_083347" description="In NOCGUS; no effect on interaction with PACS1 and PACS2; does not affect homodimerization." evidence="4 5 7">
    <original>S</original>
    <variation>F</variation>
    <location>
        <position position="119"/>
    </location>
</feature>
<feature type="sequence variant" id="VAR_087687" description="In NOCGUS." evidence="6">
    <original>S</original>
    <variation>Y</variation>
    <location>
        <position position="119"/>
    </location>
</feature>
<feature type="sequence variant" id="VAR_083348" description="In NOCGUS; no effect on interaction with PACS1 and PACS2; does not affect homodimerization." evidence="4 5 7">
    <original>T</original>
    <variation>I</variation>
    <location>
        <position position="125"/>
    </location>
</feature>
<feature type="sequence variant" id="VAR_083349" description="In NOCGUS; no effect on interaction with PACS1 and PACS2; does not affect homodimerization." evidence="4 5 7">
    <original>S</original>
    <variation>C</variation>
    <location>
        <position position="129"/>
    </location>
</feature>
<feature type="sequence variant" id="VAR_083350" description="In NOCGUS; no effect on interaction with PACS1 and PACS2; does not affect homodimerization." evidence="4 5 7">
    <original>T</original>
    <variation>I</variation>
    <location>
        <position position="130"/>
    </location>
</feature>
<feature type="sequence variant" id="VAR_087688" description="In NOCGUS; loss of interaction with PACS1 and PACS2; does not affect homodimerization; does not affect subcellular location to cytoplasm." evidence="7">
    <original>D</original>
    <variation>G</variation>
    <location>
        <position position="220"/>
    </location>
</feature>
<feature type="sequence variant" id="VAR_070806" description="In dbSNP:rs17856556." evidence="3">
    <original>Q</original>
    <variation>K</variation>
    <location>
        <position position="221"/>
    </location>
</feature>
<feature type="sequence variant" id="VAR_025432" description="In dbSNP:rs2306407.">
    <original>I</original>
    <variation>V</variation>
    <location>
        <position position="225"/>
    </location>
</feature>
<feature type="sequence variant" id="VAR_087689" description="In NOCGUS; uncertain significance; no effect on interaction with PACS1 and PACS2; does not affect homodimerization; does not affect subcellular location to cytoplasm." evidence="7">
    <original>P</original>
    <variation>H</variation>
    <location>
        <position position="257"/>
    </location>
</feature>
<feature type="sequence variant" id="VAR_087690" description="In NOCGUS; no effect on interaction with PACS1 and PACS2; does not affect homodimerization; does not affect subcellular location to cytoplasm." evidence="7">
    <original>D</original>
    <variation>N</variation>
    <location>
        <position position="260"/>
    </location>
</feature>
<feature type="sequence conflict" description="In Ref. 1; BAA76826." evidence="10" ref="1">
    <original>C</original>
    <variation>S</variation>
    <location>
        <position position="267"/>
    </location>
</feature>
<gene>
    <name type="primary">WDR37</name>
    <name type="synonym">KIAA0982</name>
</gene>
<dbReference type="EMBL" id="AB023199">
    <property type="protein sequence ID" value="BAA76826.2"/>
    <property type="status" value="ALT_INIT"/>
    <property type="molecule type" value="mRNA"/>
</dbReference>
<dbReference type="EMBL" id="AL136827">
    <property type="protein sequence ID" value="CAB66761.1"/>
    <property type="molecule type" value="mRNA"/>
</dbReference>
<dbReference type="EMBL" id="AK292591">
    <property type="protein sequence ID" value="BAF85280.1"/>
    <property type="molecule type" value="mRNA"/>
</dbReference>
<dbReference type="EMBL" id="AC022536">
    <property type="status" value="NOT_ANNOTATED_CDS"/>
    <property type="molecule type" value="Genomic_DNA"/>
</dbReference>
<dbReference type="EMBL" id="AL607085">
    <property type="status" value="NOT_ANNOTATED_CDS"/>
    <property type="molecule type" value="Genomic_DNA"/>
</dbReference>
<dbReference type="EMBL" id="CH471072">
    <property type="protein sequence ID" value="EAW86514.1"/>
    <property type="molecule type" value="Genomic_DNA"/>
</dbReference>
<dbReference type="EMBL" id="CH471072">
    <property type="protein sequence ID" value="EAW86516.1"/>
    <property type="molecule type" value="Genomic_DNA"/>
</dbReference>
<dbReference type="EMBL" id="BC018044">
    <property type="protein sequence ID" value="AAH18044.1"/>
    <property type="molecule type" value="mRNA"/>
</dbReference>
<dbReference type="CCDS" id="CCDS7057.1">
    <molecule id="Q9Y2I8-1"/>
</dbReference>
<dbReference type="PIR" id="T46442">
    <property type="entry name" value="T46442"/>
</dbReference>
<dbReference type="RefSeq" id="NP_054742.2">
    <molecule id="Q9Y2I8-1"/>
    <property type="nucleotide sequence ID" value="NM_014023.3"/>
</dbReference>
<dbReference type="SMR" id="Q9Y2I8"/>
<dbReference type="BioGRID" id="116551">
    <property type="interactions" value="78"/>
</dbReference>
<dbReference type="FunCoup" id="Q9Y2I8">
    <property type="interactions" value="4334"/>
</dbReference>
<dbReference type="IntAct" id="Q9Y2I8">
    <property type="interactions" value="41"/>
</dbReference>
<dbReference type="MINT" id="Q9Y2I8"/>
<dbReference type="STRING" id="9606.ENSP00000263150"/>
<dbReference type="GlyCosmos" id="Q9Y2I8">
    <property type="glycosylation" value="1 site, 1 glycan"/>
</dbReference>
<dbReference type="GlyGen" id="Q9Y2I8">
    <property type="glycosylation" value="3 sites, 1 O-linked glycan (3 sites)"/>
</dbReference>
<dbReference type="iPTMnet" id="Q9Y2I8"/>
<dbReference type="PhosphoSitePlus" id="Q9Y2I8"/>
<dbReference type="SwissPalm" id="Q9Y2I8"/>
<dbReference type="BioMuta" id="WDR37"/>
<dbReference type="DMDM" id="90122397"/>
<dbReference type="jPOST" id="Q9Y2I8"/>
<dbReference type="MassIVE" id="Q9Y2I8"/>
<dbReference type="PaxDb" id="9606-ENSP00000350954"/>
<dbReference type="PeptideAtlas" id="Q9Y2I8"/>
<dbReference type="ProteomicsDB" id="85805">
    <molecule id="Q9Y2I8-1"/>
</dbReference>
<dbReference type="Pumba" id="Q9Y2I8"/>
<dbReference type="Antibodypedia" id="23814">
    <property type="antibodies" value="150 antibodies from 20 providers"/>
</dbReference>
<dbReference type="DNASU" id="22884"/>
<dbReference type="Ensembl" id="ENST00000263150.9">
    <molecule id="Q9Y2I8-1"/>
    <property type="protein sequence ID" value="ENSP00000263150.4"/>
    <property type="gene ID" value="ENSG00000047056.18"/>
</dbReference>
<dbReference type="Ensembl" id="ENST00000358220.5">
    <molecule id="Q9Y2I8-1"/>
    <property type="protein sequence ID" value="ENSP00000350954.1"/>
    <property type="gene ID" value="ENSG00000047056.18"/>
</dbReference>
<dbReference type="GeneID" id="22884"/>
<dbReference type="KEGG" id="hsa:22884"/>
<dbReference type="MANE-Select" id="ENST00000263150.9">
    <property type="protein sequence ID" value="ENSP00000263150.4"/>
    <property type="RefSeq nucleotide sequence ID" value="NM_014023.4"/>
    <property type="RefSeq protein sequence ID" value="NP_054742.2"/>
</dbReference>
<dbReference type="UCSC" id="uc001igf.2">
    <molecule id="Q9Y2I8-1"/>
    <property type="organism name" value="human"/>
</dbReference>
<dbReference type="AGR" id="HGNC:31406"/>
<dbReference type="CTD" id="22884"/>
<dbReference type="DisGeNET" id="22884"/>
<dbReference type="GeneCards" id="WDR37"/>
<dbReference type="HGNC" id="HGNC:31406">
    <property type="gene designation" value="WDR37"/>
</dbReference>
<dbReference type="HPA" id="ENSG00000047056">
    <property type="expression patterns" value="Low tissue specificity"/>
</dbReference>
<dbReference type="MalaCards" id="WDR37"/>
<dbReference type="MIM" id="618586">
    <property type="type" value="gene"/>
</dbReference>
<dbReference type="MIM" id="618652">
    <property type="type" value="phenotype"/>
</dbReference>
<dbReference type="neXtProt" id="NX_Q9Y2I8"/>
<dbReference type="OpenTargets" id="ENSG00000047056"/>
<dbReference type="Orphanet" id="684305">
    <property type="disease" value="Neurooculocardiogenitourinary syndrome"/>
</dbReference>
<dbReference type="PharmGKB" id="PA134922218"/>
<dbReference type="VEuPathDB" id="HostDB:ENSG00000047056"/>
<dbReference type="eggNOG" id="KOG0300">
    <property type="taxonomic scope" value="Eukaryota"/>
</dbReference>
<dbReference type="GeneTree" id="ENSGT00930000150950"/>
<dbReference type="HOGENOM" id="CLU_036428_0_0_1"/>
<dbReference type="InParanoid" id="Q9Y2I8"/>
<dbReference type="OMA" id="TACIWGV"/>
<dbReference type="OrthoDB" id="9984207at2759"/>
<dbReference type="PAN-GO" id="Q9Y2I8">
    <property type="GO annotations" value="0 GO annotations based on evolutionary models"/>
</dbReference>
<dbReference type="PhylomeDB" id="Q9Y2I8"/>
<dbReference type="TreeFam" id="TF105876"/>
<dbReference type="PathwayCommons" id="Q9Y2I8"/>
<dbReference type="SignaLink" id="Q9Y2I8"/>
<dbReference type="BioGRID-ORCS" id="22884">
    <property type="hits" value="12 hits in 1170 CRISPR screens"/>
</dbReference>
<dbReference type="CD-CODE" id="FB4E32DD">
    <property type="entry name" value="Presynaptic clusters and postsynaptic densities"/>
</dbReference>
<dbReference type="ChiTaRS" id="WDR37">
    <property type="organism name" value="human"/>
</dbReference>
<dbReference type="GeneWiki" id="WDR37"/>
<dbReference type="GenomeRNAi" id="22884"/>
<dbReference type="Pharos" id="Q9Y2I8">
    <property type="development level" value="Tbio"/>
</dbReference>
<dbReference type="PRO" id="PR:Q9Y2I8"/>
<dbReference type="Proteomes" id="UP000005640">
    <property type="component" value="Chromosome 10"/>
</dbReference>
<dbReference type="RNAct" id="Q9Y2I8">
    <property type="molecule type" value="protein"/>
</dbReference>
<dbReference type="Bgee" id="ENSG00000047056">
    <property type="expression patterns" value="Expressed in secondary oocyte and 187 other cell types or tissues"/>
</dbReference>
<dbReference type="ExpressionAtlas" id="Q9Y2I8">
    <property type="expression patterns" value="baseline and differential"/>
</dbReference>
<dbReference type="GO" id="GO:0005737">
    <property type="term" value="C:cytoplasm"/>
    <property type="evidence" value="ECO:0000314"/>
    <property type="project" value="UniProtKB"/>
</dbReference>
<dbReference type="GO" id="GO:0005634">
    <property type="term" value="C:nucleus"/>
    <property type="evidence" value="ECO:0000314"/>
    <property type="project" value="UniProtKB"/>
</dbReference>
<dbReference type="GO" id="GO:0022038">
    <property type="term" value="P:corpus callosum development"/>
    <property type="evidence" value="ECO:0007669"/>
    <property type="project" value="Ensembl"/>
</dbReference>
<dbReference type="GO" id="GO:0002260">
    <property type="term" value="P:lymphocyte homeostasis"/>
    <property type="evidence" value="ECO:0000250"/>
    <property type="project" value="UniProtKB"/>
</dbReference>
<dbReference type="CDD" id="cd00200">
    <property type="entry name" value="WD40"/>
    <property type="match status" value="1"/>
</dbReference>
<dbReference type="FunFam" id="2.130.10.10:FF:000511">
    <property type="entry name" value="WD repeat domain 37"/>
    <property type="match status" value="1"/>
</dbReference>
<dbReference type="FunFam" id="2.130.10.10:FF:000080">
    <property type="entry name" value="WD repeat-containing protein 37"/>
    <property type="match status" value="1"/>
</dbReference>
<dbReference type="FunFam" id="2.130.10.10:FF:000152">
    <property type="entry name" value="WD repeat-containing protein 37"/>
    <property type="match status" value="1"/>
</dbReference>
<dbReference type="Gene3D" id="2.130.10.10">
    <property type="entry name" value="YVTN repeat-like/Quinoprotein amine dehydrogenase"/>
    <property type="match status" value="3"/>
</dbReference>
<dbReference type="InterPro" id="IPR020472">
    <property type="entry name" value="G-protein_beta_WD-40_rep"/>
</dbReference>
<dbReference type="InterPro" id="IPR015943">
    <property type="entry name" value="WD40/YVTN_repeat-like_dom_sf"/>
</dbReference>
<dbReference type="InterPro" id="IPR019775">
    <property type="entry name" value="WD40_repeat_CS"/>
</dbReference>
<dbReference type="InterPro" id="IPR036322">
    <property type="entry name" value="WD40_repeat_dom_sf"/>
</dbReference>
<dbReference type="InterPro" id="IPR001680">
    <property type="entry name" value="WD40_rpt"/>
</dbReference>
<dbReference type="PANTHER" id="PTHR19855:SF12">
    <property type="entry name" value="WD REPEAT-CONTAINING PROTEIN 37"/>
    <property type="match status" value="1"/>
</dbReference>
<dbReference type="PANTHER" id="PTHR19855">
    <property type="entry name" value="WD40 REPEAT PROTEIN 12, 37"/>
    <property type="match status" value="1"/>
</dbReference>
<dbReference type="Pfam" id="PF00400">
    <property type="entry name" value="WD40"/>
    <property type="match status" value="6"/>
</dbReference>
<dbReference type="PRINTS" id="PR00320">
    <property type="entry name" value="GPROTEINBRPT"/>
</dbReference>
<dbReference type="SMART" id="SM00320">
    <property type="entry name" value="WD40"/>
    <property type="match status" value="6"/>
</dbReference>
<dbReference type="SUPFAM" id="SSF50978">
    <property type="entry name" value="WD40 repeat-like"/>
    <property type="match status" value="1"/>
</dbReference>
<dbReference type="PROSITE" id="PS00678">
    <property type="entry name" value="WD_REPEATS_1"/>
    <property type="match status" value="2"/>
</dbReference>
<dbReference type="PROSITE" id="PS50082">
    <property type="entry name" value="WD_REPEATS_2"/>
    <property type="match status" value="5"/>
</dbReference>
<dbReference type="PROSITE" id="PS50294">
    <property type="entry name" value="WD_REPEATS_REGION"/>
    <property type="match status" value="1"/>
</dbReference>
<organism>
    <name type="scientific">Homo sapiens</name>
    <name type="common">Human</name>
    <dbReference type="NCBI Taxonomy" id="9606"/>
    <lineage>
        <taxon>Eukaryota</taxon>
        <taxon>Metazoa</taxon>
        <taxon>Chordata</taxon>
        <taxon>Craniata</taxon>
        <taxon>Vertebrata</taxon>
        <taxon>Euteleostomi</taxon>
        <taxon>Mammalia</taxon>
        <taxon>Eutheria</taxon>
        <taxon>Euarchontoglires</taxon>
        <taxon>Primates</taxon>
        <taxon>Haplorrhini</taxon>
        <taxon>Catarrhini</taxon>
        <taxon>Hominidae</taxon>
        <taxon>Homo</taxon>
    </lineage>
</organism>
<reference key="1">
    <citation type="journal article" date="1999" name="DNA Res.">
        <title>Prediction of the coding sequences of unidentified human genes. XIII. The complete sequences of 100 new cDNA clones from brain which code for large proteins in vitro.</title>
        <authorList>
            <person name="Nagase T."/>
            <person name="Ishikawa K."/>
            <person name="Suyama M."/>
            <person name="Kikuno R."/>
            <person name="Hirosawa M."/>
            <person name="Miyajima N."/>
            <person name="Tanaka A."/>
            <person name="Kotani H."/>
            <person name="Nomura N."/>
            <person name="Ohara O."/>
        </authorList>
    </citation>
    <scope>NUCLEOTIDE SEQUENCE [LARGE SCALE MRNA] (ISOFORM 1)</scope>
    <source>
        <tissue>Brain</tissue>
    </source>
</reference>
<reference key="2">
    <citation type="journal article" date="2001" name="Genome Res.">
        <title>Towards a catalog of human genes and proteins: sequencing and analysis of 500 novel complete protein coding human cDNAs.</title>
        <authorList>
            <person name="Wiemann S."/>
            <person name="Weil B."/>
            <person name="Wellenreuther R."/>
            <person name="Gassenhuber J."/>
            <person name="Glassl S."/>
            <person name="Ansorge W."/>
            <person name="Boecher M."/>
            <person name="Bloecker H."/>
            <person name="Bauersachs S."/>
            <person name="Blum H."/>
            <person name="Lauber J."/>
            <person name="Duesterhoeft A."/>
            <person name="Beyer A."/>
            <person name="Koehrer K."/>
            <person name="Strack N."/>
            <person name="Mewes H.-W."/>
            <person name="Ottenwaelder B."/>
            <person name="Obermaier B."/>
            <person name="Tampe J."/>
            <person name="Heubner D."/>
            <person name="Wambutt R."/>
            <person name="Korn B."/>
            <person name="Klein M."/>
            <person name="Poustka A."/>
        </authorList>
    </citation>
    <scope>NUCLEOTIDE SEQUENCE [LARGE SCALE MRNA] (ISOFORM 1)</scope>
    <source>
        <tissue>Testis</tissue>
    </source>
</reference>
<reference key="3">
    <citation type="journal article" date="2004" name="Nat. Genet.">
        <title>Complete sequencing and characterization of 21,243 full-length human cDNAs.</title>
        <authorList>
            <person name="Ota T."/>
            <person name="Suzuki Y."/>
            <person name="Nishikawa T."/>
            <person name="Otsuki T."/>
            <person name="Sugiyama T."/>
            <person name="Irie R."/>
            <person name="Wakamatsu A."/>
            <person name="Hayashi K."/>
            <person name="Sato H."/>
            <person name="Nagai K."/>
            <person name="Kimura K."/>
            <person name="Makita H."/>
            <person name="Sekine M."/>
            <person name="Obayashi M."/>
            <person name="Nishi T."/>
            <person name="Shibahara T."/>
            <person name="Tanaka T."/>
            <person name="Ishii S."/>
            <person name="Yamamoto J."/>
            <person name="Saito K."/>
            <person name="Kawai Y."/>
            <person name="Isono Y."/>
            <person name="Nakamura Y."/>
            <person name="Nagahari K."/>
            <person name="Murakami K."/>
            <person name="Yasuda T."/>
            <person name="Iwayanagi T."/>
            <person name="Wagatsuma M."/>
            <person name="Shiratori A."/>
            <person name="Sudo H."/>
            <person name="Hosoiri T."/>
            <person name="Kaku Y."/>
            <person name="Kodaira H."/>
            <person name="Kondo H."/>
            <person name="Sugawara M."/>
            <person name="Takahashi M."/>
            <person name="Kanda K."/>
            <person name="Yokoi T."/>
            <person name="Furuya T."/>
            <person name="Kikkawa E."/>
            <person name="Omura Y."/>
            <person name="Abe K."/>
            <person name="Kamihara K."/>
            <person name="Katsuta N."/>
            <person name="Sato K."/>
            <person name="Tanikawa M."/>
            <person name="Yamazaki M."/>
            <person name="Ninomiya K."/>
            <person name="Ishibashi T."/>
            <person name="Yamashita H."/>
            <person name="Murakawa K."/>
            <person name="Fujimori K."/>
            <person name="Tanai H."/>
            <person name="Kimata M."/>
            <person name="Watanabe M."/>
            <person name="Hiraoka S."/>
            <person name="Chiba Y."/>
            <person name="Ishida S."/>
            <person name="Ono Y."/>
            <person name="Takiguchi S."/>
            <person name="Watanabe S."/>
            <person name="Yosida M."/>
            <person name="Hotuta T."/>
            <person name="Kusano J."/>
            <person name="Kanehori K."/>
            <person name="Takahashi-Fujii A."/>
            <person name="Hara H."/>
            <person name="Tanase T.-O."/>
            <person name="Nomura Y."/>
            <person name="Togiya S."/>
            <person name="Komai F."/>
            <person name="Hara R."/>
            <person name="Takeuchi K."/>
            <person name="Arita M."/>
            <person name="Imose N."/>
            <person name="Musashino K."/>
            <person name="Yuuki H."/>
            <person name="Oshima A."/>
            <person name="Sasaki N."/>
            <person name="Aotsuka S."/>
            <person name="Yoshikawa Y."/>
            <person name="Matsunawa H."/>
            <person name="Ichihara T."/>
            <person name="Shiohata N."/>
            <person name="Sano S."/>
            <person name="Moriya S."/>
            <person name="Momiyama H."/>
            <person name="Satoh N."/>
            <person name="Takami S."/>
            <person name="Terashima Y."/>
            <person name="Suzuki O."/>
            <person name="Nakagawa S."/>
            <person name="Senoh A."/>
            <person name="Mizoguchi H."/>
            <person name="Goto Y."/>
            <person name="Shimizu F."/>
            <person name="Wakebe H."/>
            <person name="Hishigaki H."/>
            <person name="Watanabe T."/>
            <person name="Sugiyama A."/>
            <person name="Takemoto M."/>
            <person name="Kawakami B."/>
            <person name="Yamazaki M."/>
            <person name="Watanabe K."/>
            <person name="Kumagai A."/>
            <person name="Itakura S."/>
            <person name="Fukuzumi Y."/>
            <person name="Fujimori Y."/>
            <person name="Komiyama M."/>
            <person name="Tashiro H."/>
            <person name="Tanigami A."/>
            <person name="Fujiwara T."/>
            <person name="Ono T."/>
            <person name="Yamada K."/>
            <person name="Fujii Y."/>
            <person name="Ozaki K."/>
            <person name="Hirao M."/>
            <person name="Ohmori Y."/>
            <person name="Kawabata A."/>
            <person name="Hikiji T."/>
            <person name="Kobatake N."/>
            <person name="Inagaki H."/>
            <person name="Ikema Y."/>
            <person name="Okamoto S."/>
            <person name="Okitani R."/>
            <person name="Kawakami T."/>
            <person name="Noguchi S."/>
            <person name="Itoh T."/>
            <person name="Shigeta K."/>
            <person name="Senba T."/>
            <person name="Matsumura K."/>
            <person name="Nakajima Y."/>
            <person name="Mizuno T."/>
            <person name="Morinaga M."/>
            <person name="Sasaki M."/>
            <person name="Togashi T."/>
            <person name="Oyama M."/>
            <person name="Hata H."/>
            <person name="Watanabe M."/>
            <person name="Komatsu T."/>
            <person name="Mizushima-Sugano J."/>
            <person name="Satoh T."/>
            <person name="Shirai Y."/>
            <person name="Takahashi Y."/>
            <person name="Nakagawa K."/>
            <person name="Okumura K."/>
            <person name="Nagase T."/>
            <person name="Nomura N."/>
            <person name="Kikuchi H."/>
            <person name="Masuho Y."/>
            <person name="Yamashita R."/>
            <person name="Nakai K."/>
            <person name="Yada T."/>
            <person name="Nakamura Y."/>
            <person name="Ohara O."/>
            <person name="Isogai T."/>
            <person name="Sugano S."/>
        </authorList>
    </citation>
    <scope>NUCLEOTIDE SEQUENCE [LARGE SCALE MRNA] (ISOFORM 2)</scope>
    <source>
        <tissue>Testis</tissue>
    </source>
</reference>
<reference key="4">
    <citation type="journal article" date="2004" name="Nature">
        <title>The DNA sequence and comparative analysis of human chromosome 10.</title>
        <authorList>
            <person name="Deloukas P."/>
            <person name="Earthrowl M.E."/>
            <person name="Grafham D.V."/>
            <person name="Rubenfield M."/>
            <person name="French L."/>
            <person name="Steward C.A."/>
            <person name="Sims S.K."/>
            <person name="Jones M.C."/>
            <person name="Searle S."/>
            <person name="Scott C."/>
            <person name="Howe K."/>
            <person name="Hunt S.E."/>
            <person name="Andrews T.D."/>
            <person name="Gilbert J.G.R."/>
            <person name="Swarbreck D."/>
            <person name="Ashurst J.L."/>
            <person name="Taylor A."/>
            <person name="Battles J."/>
            <person name="Bird C.P."/>
            <person name="Ainscough R."/>
            <person name="Almeida J.P."/>
            <person name="Ashwell R.I.S."/>
            <person name="Ambrose K.D."/>
            <person name="Babbage A.K."/>
            <person name="Bagguley C.L."/>
            <person name="Bailey J."/>
            <person name="Banerjee R."/>
            <person name="Bates K."/>
            <person name="Beasley H."/>
            <person name="Bray-Allen S."/>
            <person name="Brown A.J."/>
            <person name="Brown J.Y."/>
            <person name="Burford D.C."/>
            <person name="Burrill W."/>
            <person name="Burton J."/>
            <person name="Cahill P."/>
            <person name="Camire D."/>
            <person name="Carter N.P."/>
            <person name="Chapman J.C."/>
            <person name="Clark S.Y."/>
            <person name="Clarke G."/>
            <person name="Clee C.M."/>
            <person name="Clegg S."/>
            <person name="Corby N."/>
            <person name="Coulson A."/>
            <person name="Dhami P."/>
            <person name="Dutta I."/>
            <person name="Dunn M."/>
            <person name="Faulkner L."/>
            <person name="Frankish A."/>
            <person name="Frankland J.A."/>
            <person name="Garner P."/>
            <person name="Garnett J."/>
            <person name="Gribble S."/>
            <person name="Griffiths C."/>
            <person name="Grocock R."/>
            <person name="Gustafson E."/>
            <person name="Hammond S."/>
            <person name="Harley J.L."/>
            <person name="Hart E."/>
            <person name="Heath P.D."/>
            <person name="Ho T.P."/>
            <person name="Hopkins B."/>
            <person name="Horne J."/>
            <person name="Howden P.J."/>
            <person name="Huckle E."/>
            <person name="Hynds C."/>
            <person name="Johnson C."/>
            <person name="Johnson D."/>
            <person name="Kana A."/>
            <person name="Kay M."/>
            <person name="Kimberley A.M."/>
            <person name="Kershaw J.K."/>
            <person name="Kokkinaki M."/>
            <person name="Laird G.K."/>
            <person name="Lawlor S."/>
            <person name="Lee H.M."/>
            <person name="Leongamornlert D.A."/>
            <person name="Laird G."/>
            <person name="Lloyd C."/>
            <person name="Lloyd D.M."/>
            <person name="Loveland J."/>
            <person name="Lovell J."/>
            <person name="McLaren S."/>
            <person name="McLay K.E."/>
            <person name="McMurray A."/>
            <person name="Mashreghi-Mohammadi M."/>
            <person name="Matthews L."/>
            <person name="Milne S."/>
            <person name="Nickerson T."/>
            <person name="Nguyen M."/>
            <person name="Overton-Larty E."/>
            <person name="Palmer S.A."/>
            <person name="Pearce A.V."/>
            <person name="Peck A.I."/>
            <person name="Pelan S."/>
            <person name="Phillimore B."/>
            <person name="Porter K."/>
            <person name="Rice C.M."/>
            <person name="Rogosin A."/>
            <person name="Ross M.T."/>
            <person name="Sarafidou T."/>
            <person name="Sehra H.K."/>
            <person name="Shownkeen R."/>
            <person name="Skuce C.D."/>
            <person name="Smith M."/>
            <person name="Standring L."/>
            <person name="Sycamore N."/>
            <person name="Tester J."/>
            <person name="Thorpe A."/>
            <person name="Torcasso W."/>
            <person name="Tracey A."/>
            <person name="Tromans A."/>
            <person name="Tsolas J."/>
            <person name="Wall M."/>
            <person name="Walsh J."/>
            <person name="Wang H."/>
            <person name="Weinstock K."/>
            <person name="West A.P."/>
            <person name="Willey D.L."/>
            <person name="Whitehead S.L."/>
            <person name="Wilming L."/>
            <person name="Wray P.W."/>
            <person name="Young L."/>
            <person name="Chen Y."/>
            <person name="Lovering R.C."/>
            <person name="Moschonas N.K."/>
            <person name="Siebert R."/>
            <person name="Fechtel K."/>
            <person name="Bentley D."/>
            <person name="Durbin R.M."/>
            <person name="Hubbard T."/>
            <person name="Doucette-Stamm L."/>
            <person name="Beck S."/>
            <person name="Smith D.R."/>
            <person name="Rogers J."/>
        </authorList>
    </citation>
    <scope>NUCLEOTIDE SEQUENCE [LARGE SCALE GENOMIC DNA]</scope>
</reference>
<reference key="5">
    <citation type="submission" date="2005-09" db="EMBL/GenBank/DDBJ databases">
        <authorList>
            <person name="Mural R.J."/>
            <person name="Istrail S."/>
            <person name="Sutton G.G."/>
            <person name="Florea L."/>
            <person name="Halpern A.L."/>
            <person name="Mobarry C.M."/>
            <person name="Lippert R."/>
            <person name="Walenz B."/>
            <person name="Shatkay H."/>
            <person name="Dew I."/>
            <person name="Miller J.R."/>
            <person name="Flanigan M.J."/>
            <person name="Edwards N.J."/>
            <person name="Bolanos R."/>
            <person name="Fasulo D."/>
            <person name="Halldorsson B.V."/>
            <person name="Hannenhalli S."/>
            <person name="Turner R."/>
            <person name="Yooseph S."/>
            <person name="Lu F."/>
            <person name="Nusskern D.R."/>
            <person name="Shue B.C."/>
            <person name="Zheng X.H."/>
            <person name="Zhong F."/>
            <person name="Delcher A.L."/>
            <person name="Huson D.H."/>
            <person name="Kravitz S.A."/>
            <person name="Mouchard L."/>
            <person name="Reinert K."/>
            <person name="Remington K.A."/>
            <person name="Clark A.G."/>
            <person name="Waterman M.S."/>
            <person name="Eichler E.E."/>
            <person name="Adams M.D."/>
            <person name="Hunkapiller M.W."/>
            <person name="Myers E.W."/>
            <person name="Venter J.C."/>
        </authorList>
    </citation>
    <scope>NUCLEOTIDE SEQUENCE [LARGE SCALE GENOMIC DNA]</scope>
</reference>
<reference key="6">
    <citation type="journal article" date="2004" name="Genome Res.">
        <title>The status, quality, and expansion of the NIH full-length cDNA project: the Mammalian Gene Collection (MGC).</title>
        <authorList>
            <consortium name="The MGC Project Team"/>
        </authorList>
    </citation>
    <scope>NUCLEOTIDE SEQUENCE [LARGE SCALE MRNA] (ISOFORM 3)</scope>
    <scope>VARIANTS THR-11 AND LYS-221</scope>
    <source>
        <tissue>Brain</tissue>
    </source>
</reference>
<reference key="7">
    <citation type="journal article" date="2012" name="Proc. Natl. Acad. Sci. U.S.A.">
        <title>N-terminal acetylome analyses and functional insights of the N-terminal acetyltransferase NatB.</title>
        <authorList>
            <person name="Van Damme P."/>
            <person name="Lasa M."/>
            <person name="Polevoda B."/>
            <person name="Gazquez C."/>
            <person name="Elosegui-Artola A."/>
            <person name="Kim D.S."/>
            <person name="De Juan-Pardo E."/>
            <person name="Demeyer K."/>
            <person name="Hole K."/>
            <person name="Larrea E."/>
            <person name="Timmerman E."/>
            <person name="Prieto J."/>
            <person name="Arnesen T."/>
            <person name="Sherman F."/>
            <person name="Gevaert K."/>
            <person name="Aldabe R."/>
        </authorList>
    </citation>
    <scope>IDENTIFICATION BY MASS SPECTROMETRY [LARGE SCALE ANALYSIS]</scope>
</reference>
<reference key="8">
    <citation type="journal article" date="2019" name="Am. J. Hum. Genet.">
        <title>De novo variants in WDR37 are associated with epilepsy, colobomas, dysmorphism, developmental delay, intellectual disability, and cerebellar hypoplasia.</title>
        <authorList>
            <consortium name="Undiagnosed Diseases Network"/>
            <person name="Kanca O."/>
            <person name="Andrews J.C."/>
            <person name="Lee P.T."/>
            <person name="Patel C."/>
            <person name="Braddock S.R."/>
            <person name="Slavotinek A.M."/>
            <person name="Cohen J.S."/>
            <person name="Gubbels C.S."/>
            <person name="Aldinger K.A."/>
            <person name="Williams J."/>
            <person name="Indaram M."/>
            <person name="Fatemi A."/>
            <person name="Yu T.W."/>
            <person name="Agrawal P.B."/>
            <person name="Vezina G."/>
            <person name="Simons C."/>
            <person name="Crawford J."/>
            <person name="Lau C.C."/>
            <person name="Chung W.K."/>
            <person name="Markello T.C."/>
            <person name="Dobyns W.B."/>
            <person name="Adams D.R."/>
            <person name="Gahl W.A."/>
            <person name="Wangler M.F."/>
            <person name="Yamamoto S."/>
            <person name="Bellen H.J."/>
            <person name="Malicdan M.C.V."/>
        </authorList>
    </citation>
    <scope>INVOLVEMENT IN NOCGUS</scope>
    <scope>VARIANTS NOCGUS PHE-119; ILE-125; CYS-129 AND ILE-130</scope>
</reference>
<reference key="9">
    <citation type="journal article" date="2019" name="Am. J. Hum. Genet.">
        <authorList>
            <consortium name="Undiagnosed Diseases Network"/>
            <person name="Kanca O."/>
            <person name="Andrews J.C."/>
            <person name="Lee P.T."/>
            <person name="Patel C."/>
            <person name="Braddock S.R."/>
            <person name="Slavotinek A.M."/>
            <person name="Cohen J.S."/>
            <person name="Gubbels C.S."/>
            <person name="Aldinger K.A."/>
            <person name="Williams J."/>
            <person name="Indaram M."/>
            <person name="Fatemi A."/>
            <person name="Yu T.W."/>
            <person name="Agrawal P.B."/>
            <person name="Vezina G."/>
            <person name="Simons C."/>
            <person name="Crawford J."/>
            <person name="Lau C.C."/>
            <person name="Chung W.K."/>
            <person name="Markello T.C."/>
            <person name="Dobyns W.B."/>
            <person name="Adams D.R."/>
            <person name="Gahl W.A."/>
            <person name="Wangler M.F."/>
            <person name="Yamamoto S."/>
            <person name="Bellen H.J."/>
            <person name="Malicdan M.C.V."/>
        </authorList>
    </citation>
    <scope>ERRATUM OF PUBMED:31327508</scope>
</reference>
<reference key="10">
    <citation type="journal article" date="2019" name="Am. J. Hum. Genet.">
        <title>De novo missense variants in WDR37 cause a severe multisystemic syndrome.</title>
        <authorList>
            <person name="Reis L.M."/>
            <person name="Sorokina E.A."/>
            <person name="Thompson S."/>
            <person name="Muheisen S."/>
            <person name="Velinov M."/>
            <person name="Zamora C."/>
            <person name="Aylsworth A.S."/>
            <person name="Semina E.V."/>
        </authorList>
    </citation>
    <scope>SUBCELLULAR LOCATION</scope>
    <scope>INVOLVEMENT IN NOCGUS</scope>
    <scope>VARIANTS NOCGUS PHE-119; ILE-125; CYS-129 AND ILE-130</scope>
</reference>
<reference key="11">
    <citation type="journal article" date="2020" name="Clin. Genet.">
        <title>Expanding the phenotypic spectrum consequent upon de novo WDR37 missense variants.</title>
        <authorList>
            <person name="Hay E."/>
            <person name="Henderson R.H."/>
            <person name="Mansour S."/>
            <person name="Deshpande C."/>
            <person name="Jones R."/>
            <person name="Nutan S."/>
            <person name="Mankad K."/>
            <person name="Young R.M."/>
            <person name="Moosajee M."/>
            <person name="Research Consortium G.E."/>
            <person name="Arno G."/>
        </authorList>
    </citation>
    <scope>VARIANTS NOCGUS ILE-115 AND TYR-119</scope>
</reference>
<reference key="12">
    <citation type="journal article" date="2021" name="Hum. Genet.">
        <title>WDR37 syndrome: identification of a distinct new cluster of disease-associated variants and functional analyses of mutant proteins.</title>
        <authorList>
            <person name="Sorokina E.A."/>
            <person name="Reis L.M."/>
            <person name="Thompson S."/>
            <person name="Agre K."/>
            <person name="Babovic-Vuksanovic D."/>
            <person name="Ellingson M.S."/>
            <person name="Hasadsri L."/>
            <person name="van Bever Y."/>
            <person name="Semina E.V."/>
        </authorList>
    </citation>
    <scope>VARIANTS NOCGUS GLY-220; HIS-257 AND ASN-260</scope>
    <scope>SUBCELLULAR LOCATION</scope>
    <scope>SUBUNIT</scope>
    <scope>INTERACTION WITH PACS1 AND PACS2</scope>
    <scope>CHARACTERIZATION OF VARIANTS NOCGUS PHE-119; ILE-125; CYS-129; ILE-130; GLY-220; HIS-257 AND ASN-260</scope>
</reference>